<name>RET4_HORSE</name>
<comment type="function">
    <text evidence="1">Retinol-binding protein that mediates retinol transport in blood plasma. Delivers retinol from the liver stores to the peripheral tissues. Transfers the bound all-trans retinol to STRA6, that then facilitates retinol transport across the cell membrane.</text>
</comment>
<comment type="subunit">
    <text evidence="1">Interacts with TTR. Interaction with TTR prevents its loss by filtration through the kidney glomeruli. Interacts with STRA6.</text>
</comment>
<comment type="subcellular location">
    <subcellularLocation>
        <location evidence="1">Secreted</location>
    </subcellularLocation>
</comment>
<comment type="similarity">
    <text evidence="4">Belongs to the calycin superfamily. Lipocalin family.</text>
</comment>
<accession>Q28369</accession>
<sequence>MEWVWALVVLAALGSAGAERDCRVSSFRVKENFDKARFSGTWYAMAKKDPEGLFLQDNIVAEFSVDEYGQMSATAKGRVRLLNNWDVCADMVGTFTDTEDPAKFKMKYWGVASFLQKGNDDHWIIDTDYDTYAVQYSCRLLNLDGTCADSYSFVFARDPNGFPPEVQRIVRRRQEELCLARQYRLISHNGYCDGKSDRNLL</sequence>
<reference key="1">
    <citation type="journal article" date="1995" name="Biol. Reprod.">
        <title>Changes in equine endometrial retinol-binding protein RNA during the estrous cycle and early pregnancy and with exogenous steroids.</title>
        <authorList>
            <person name="McDowell K.J."/>
            <person name="Adams M.H."/>
            <person name="Franklin K.M."/>
            <person name="Baker C.B."/>
        </authorList>
    </citation>
    <scope>NUCLEOTIDE SEQUENCE [MRNA]</scope>
    <source>
        <tissue>Endometrium</tissue>
    </source>
</reference>
<protein>
    <recommendedName>
        <fullName>Retinol-binding protein 4</fullName>
    </recommendedName>
    <alternativeName>
        <fullName>Plasma retinol-binding protein</fullName>
        <shortName>PRBP</shortName>
        <shortName>RBP</shortName>
    </alternativeName>
</protein>
<feature type="signal peptide" evidence="1">
    <location>
        <begin position="1"/>
        <end position="18"/>
    </location>
</feature>
<feature type="chain" id="PRO_0000017960" description="Retinol-binding protein 4">
    <location>
        <begin position="19"/>
        <end position="201"/>
    </location>
</feature>
<feature type="binding site" evidence="2">
    <location>
        <position position="116"/>
    </location>
    <ligand>
        <name>substrate</name>
    </ligand>
</feature>
<feature type="modified residue" description="Omega-N-methylarginine" evidence="3">
    <location>
        <position position="139"/>
    </location>
</feature>
<feature type="disulfide bond" evidence="1">
    <location>
        <begin position="22"/>
        <end position="178"/>
    </location>
</feature>
<feature type="disulfide bond" evidence="1">
    <location>
        <begin position="88"/>
        <end position="192"/>
    </location>
</feature>
<feature type="disulfide bond" evidence="1">
    <location>
        <begin position="138"/>
        <end position="147"/>
    </location>
</feature>
<dbReference type="EMBL" id="U21208">
    <property type="protein sequence ID" value="AAC48461.1"/>
    <property type="molecule type" value="mRNA"/>
</dbReference>
<dbReference type="PIR" id="I46257">
    <property type="entry name" value="I46257"/>
</dbReference>
<dbReference type="RefSeq" id="NP_001075420.1">
    <property type="nucleotide sequence ID" value="NM_001081951.1"/>
</dbReference>
<dbReference type="SMR" id="Q28369"/>
<dbReference type="STRING" id="9796.ENSECAP00000049551"/>
<dbReference type="PaxDb" id="9796-ENSECAP00000049551"/>
<dbReference type="PeptideAtlas" id="Q28369"/>
<dbReference type="GeneID" id="100049790"/>
<dbReference type="KEGG" id="ecb:100049790"/>
<dbReference type="CTD" id="5950"/>
<dbReference type="InParanoid" id="Q28369"/>
<dbReference type="OrthoDB" id="9923952at2759"/>
<dbReference type="Proteomes" id="UP000002281">
    <property type="component" value="Unplaced"/>
</dbReference>
<dbReference type="GO" id="GO:0005615">
    <property type="term" value="C:extracellular space"/>
    <property type="evidence" value="ECO:0000250"/>
    <property type="project" value="UniProtKB"/>
</dbReference>
<dbReference type="GO" id="GO:0016918">
    <property type="term" value="F:retinal binding"/>
    <property type="evidence" value="ECO:0007669"/>
    <property type="project" value="UniProtKB-KW"/>
</dbReference>
<dbReference type="GO" id="GO:0019841">
    <property type="term" value="F:retinol binding"/>
    <property type="evidence" value="ECO:0000318"/>
    <property type="project" value="GO_Central"/>
</dbReference>
<dbReference type="GO" id="GO:0034632">
    <property type="term" value="F:retinol transmembrane transporter activity"/>
    <property type="evidence" value="ECO:0007669"/>
    <property type="project" value="InterPro"/>
</dbReference>
<dbReference type="GO" id="GO:0034633">
    <property type="term" value="P:retinol transport"/>
    <property type="evidence" value="ECO:0000318"/>
    <property type="project" value="GO_Central"/>
</dbReference>
<dbReference type="CDD" id="cd00743">
    <property type="entry name" value="lipocalin_RBP_like"/>
    <property type="match status" value="1"/>
</dbReference>
<dbReference type="FunFam" id="2.40.128.20:FF:000004">
    <property type="entry name" value="Retinol-binding protein 4"/>
    <property type="match status" value="1"/>
</dbReference>
<dbReference type="Gene3D" id="2.40.128.20">
    <property type="match status" value="1"/>
</dbReference>
<dbReference type="InterPro" id="IPR012674">
    <property type="entry name" value="Calycin"/>
</dbReference>
<dbReference type="InterPro" id="IPR022271">
    <property type="entry name" value="Lipocalin_ApoD"/>
</dbReference>
<dbReference type="InterPro" id="IPR022272">
    <property type="entry name" value="Lipocalin_CS"/>
</dbReference>
<dbReference type="InterPro" id="IPR000566">
    <property type="entry name" value="Lipocln_cytosolic_FA-bd_dom"/>
</dbReference>
<dbReference type="InterPro" id="IPR002449">
    <property type="entry name" value="Retinol-bd/Purpurin"/>
</dbReference>
<dbReference type="PANTHER" id="PTHR11873">
    <property type="entry name" value="RETINOL-BINDING PROTEIN 4"/>
    <property type="match status" value="1"/>
</dbReference>
<dbReference type="PANTHER" id="PTHR11873:SF2">
    <property type="entry name" value="RETINOL-BINDING PROTEIN 4"/>
    <property type="match status" value="1"/>
</dbReference>
<dbReference type="Pfam" id="PF00061">
    <property type="entry name" value="Lipocalin"/>
    <property type="match status" value="1"/>
</dbReference>
<dbReference type="PIRSF" id="PIRSF036893">
    <property type="entry name" value="Lipocalin_ApoD"/>
    <property type="match status" value="1"/>
</dbReference>
<dbReference type="PIRSF" id="PIRSF500204">
    <property type="entry name" value="RBP_purpurin"/>
    <property type="match status" value="1"/>
</dbReference>
<dbReference type="PRINTS" id="PR00179">
    <property type="entry name" value="LIPOCALIN"/>
</dbReference>
<dbReference type="PRINTS" id="PR01174">
    <property type="entry name" value="RETINOLBNDNG"/>
</dbReference>
<dbReference type="SUPFAM" id="SSF50814">
    <property type="entry name" value="Lipocalins"/>
    <property type="match status" value="1"/>
</dbReference>
<dbReference type="PROSITE" id="PS00213">
    <property type="entry name" value="LIPOCALIN"/>
    <property type="match status" value="1"/>
</dbReference>
<proteinExistence type="evidence at transcript level"/>
<keyword id="KW-1015">Disulfide bond</keyword>
<keyword id="KW-0488">Methylation</keyword>
<keyword id="KW-1185">Reference proteome</keyword>
<keyword id="KW-0683">Retinol-binding</keyword>
<keyword id="KW-0964">Secreted</keyword>
<keyword id="KW-0732">Signal</keyword>
<keyword id="KW-0813">Transport</keyword>
<keyword id="KW-0845">Vitamin A</keyword>
<evidence type="ECO:0000250" key="1">
    <source>
        <dbReference type="UniProtKB" id="P02753"/>
    </source>
</evidence>
<evidence type="ECO:0000250" key="2">
    <source>
        <dbReference type="UniProtKB" id="P27485"/>
    </source>
</evidence>
<evidence type="ECO:0000250" key="3">
    <source>
        <dbReference type="UniProtKB" id="Q00724"/>
    </source>
</evidence>
<evidence type="ECO:0000305" key="4"/>
<gene>
    <name type="primary">RBP4</name>
</gene>
<organism>
    <name type="scientific">Equus caballus</name>
    <name type="common">Horse</name>
    <dbReference type="NCBI Taxonomy" id="9796"/>
    <lineage>
        <taxon>Eukaryota</taxon>
        <taxon>Metazoa</taxon>
        <taxon>Chordata</taxon>
        <taxon>Craniata</taxon>
        <taxon>Vertebrata</taxon>
        <taxon>Euteleostomi</taxon>
        <taxon>Mammalia</taxon>
        <taxon>Eutheria</taxon>
        <taxon>Laurasiatheria</taxon>
        <taxon>Perissodactyla</taxon>
        <taxon>Equidae</taxon>
        <taxon>Equus</taxon>
    </lineage>
</organism>